<name>FCF1_ECOLX</name>
<keyword id="KW-0119">Carbohydrate metabolism</keyword>
<keyword id="KW-0448">Lipopolysaccharide biosynthesis</keyword>
<keyword id="KW-0520">NAD</keyword>
<keyword id="KW-0521">NADP</keyword>
<keyword id="KW-0560">Oxidoreductase</keyword>
<accession>Q6E7F2</accession>
<dbReference type="EC" id="1.1.1.266"/>
<dbReference type="EMBL" id="AY528413">
    <property type="protein sequence ID" value="AAS99161.1"/>
    <property type="molecule type" value="Genomic_DNA"/>
</dbReference>
<dbReference type="SMR" id="Q6E7F2"/>
<dbReference type="KEGG" id="ag:AAS99161"/>
<dbReference type="BioCyc" id="MetaCyc:MONOMER-18130"/>
<dbReference type="UniPathway" id="UPA00281"/>
<dbReference type="GO" id="GO:0050573">
    <property type="term" value="F:dTDP-4-dehydro-6-deoxyglucose reductase activity"/>
    <property type="evidence" value="ECO:0000314"/>
    <property type="project" value="UniProtKB"/>
</dbReference>
<dbReference type="GO" id="GO:0048029">
    <property type="term" value="F:monosaccharide binding"/>
    <property type="evidence" value="ECO:0000314"/>
    <property type="project" value="UniProtKB"/>
</dbReference>
<dbReference type="GO" id="GO:0070404">
    <property type="term" value="F:NADH binding"/>
    <property type="evidence" value="ECO:0000314"/>
    <property type="project" value="UniProtKB"/>
</dbReference>
<dbReference type="GO" id="GO:0070402">
    <property type="term" value="F:NADPH binding"/>
    <property type="evidence" value="ECO:0000314"/>
    <property type="project" value="UniProtKB"/>
</dbReference>
<dbReference type="GO" id="GO:0042353">
    <property type="term" value="P:fucose biosynthetic process"/>
    <property type="evidence" value="ECO:0000314"/>
    <property type="project" value="UniProtKB"/>
</dbReference>
<dbReference type="GO" id="GO:0009243">
    <property type="term" value="P:O antigen biosynthetic process"/>
    <property type="evidence" value="ECO:0000315"/>
    <property type="project" value="UniProtKB"/>
</dbReference>
<dbReference type="CDD" id="cd05264">
    <property type="entry name" value="UDP_G4E_5_SDR_e"/>
    <property type="match status" value="1"/>
</dbReference>
<dbReference type="Gene3D" id="3.40.50.720">
    <property type="entry name" value="NAD(P)-binding Rossmann-like Domain"/>
    <property type="match status" value="1"/>
</dbReference>
<dbReference type="Gene3D" id="3.90.25.10">
    <property type="entry name" value="UDP-galactose 4-epimerase, domain 1"/>
    <property type="match status" value="1"/>
</dbReference>
<dbReference type="InterPro" id="IPR001509">
    <property type="entry name" value="Epimerase_deHydtase"/>
</dbReference>
<dbReference type="InterPro" id="IPR036291">
    <property type="entry name" value="NAD(P)-bd_dom_sf"/>
</dbReference>
<dbReference type="PANTHER" id="PTHR43000">
    <property type="entry name" value="DTDP-D-GLUCOSE 4,6-DEHYDRATASE-RELATED"/>
    <property type="match status" value="1"/>
</dbReference>
<dbReference type="Pfam" id="PF01370">
    <property type="entry name" value="Epimerase"/>
    <property type="match status" value="1"/>
</dbReference>
<dbReference type="SUPFAM" id="SSF51735">
    <property type="entry name" value="NAD(P)-binding Rossmann-fold domains"/>
    <property type="match status" value="1"/>
</dbReference>
<evidence type="ECO:0000250" key="1"/>
<evidence type="ECO:0000269" key="2">
    <source>
    </source>
</evidence>
<evidence type="ECO:0000305" key="3"/>
<protein>
    <recommendedName>
        <fullName>dTDP-4-dehydro-6-deoxyglucose reductase</fullName>
        <ecNumber>1.1.1.266</ecNumber>
    </recommendedName>
    <alternativeName>
        <fullName>dTDP-4-dehydro-6-deoxy-D-glucose reductase</fullName>
    </alternativeName>
    <alternativeName>
        <fullName>dTDP-4-keto-6-deoxyglucose reductase</fullName>
    </alternativeName>
    <alternativeName>
        <fullName>dTDP-6-deoxy-D-xylo-hex-4-ulopyranose reductase</fullName>
    </alternativeName>
</protein>
<sequence length="316" mass="35595">MDARKNGVLITGGAGFIGKALITEMVERQIPLVSFDISDKPDSLPELSEYFNWYKFSYLESSQRIKELHEIVSRHNIKTVIHLATTMFPHESKKNIDKDCLENVYANVCFFKNLYENGCEKIIFASSGGTVYGKSDTPFSEDDALLPEISYGLSKVMTETYLRFIAKELNGKSISLRISNPYGEGQRIDGKQGVIPIFLNKISNDIPIDIIGSIESKRDYIYISDLVQAFMCSLEYEGHEDIFNIGSGESITLKKLIETIEFKLNKKAVIGFQDPIHTNANGIILDIKRAMAELGWRPTVVLDDGIDKLIKSIRCK</sequence>
<comment type="function">
    <text evidence="2">Catalyzes the stereospecific reduction of the C-4 keto group of dTDP-4-dehydro-6-deoxy-D-glucose, leading to dTDP-D-fucopyranose. This is a step in the biosynthesis of D-fucofuranose, a component of E.coli O52 O antigen. Is more efficient using NADH than NADPH as cosubstrate.</text>
</comment>
<comment type="catalytic activity">
    <reaction evidence="2">
        <text>dTDP-alpha-D-fucose + NAD(+) = dTDP-4-dehydro-6-deoxy-alpha-D-glucose + NADH + H(+)</text>
        <dbReference type="Rhea" id="RHEA:36579"/>
        <dbReference type="ChEBI" id="CHEBI:15378"/>
        <dbReference type="ChEBI" id="CHEBI:57540"/>
        <dbReference type="ChEBI" id="CHEBI:57649"/>
        <dbReference type="ChEBI" id="CHEBI:57945"/>
        <dbReference type="ChEBI" id="CHEBI:73933"/>
        <dbReference type="EC" id="1.1.1.266"/>
    </reaction>
</comment>
<comment type="catalytic activity">
    <reaction evidence="2">
        <text>dTDP-alpha-D-fucose + NADP(+) = dTDP-4-dehydro-6-deoxy-alpha-D-glucose + NADPH + H(+)</text>
        <dbReference type="Rhea" id="RHEA:36583"/>
        <dbReference type="ChEBI" id="CHEBI:15378"/>
        <dbReference type="ChEBI" id="CHEBI:57649"/>
        <dbReference type="ChEBI" id="CHEBI:57783"/>
        <dbReference type="ChEBI" id="CHEBI:58349"/>
        <dbReference type="ChEBI" id="CHEBI:73933"/>
        <dbReference type="EC" id="1.1.1.266"/>
    </reaction>
</comment>
<comment type="activity regulation">
    <text evidence="2">Inhibited by Cu(2+), while other divalent cations such as Ca(2+), Co(2+), Fe(2+), Mn(2+) and Mg(2+) have no obvious effects on enzyme activity.</text>
</comment>
<comment type="biophysicochemical properties">
    <kinetics>
        <KM evidence="2">0.38 mM for dTDP-4-dehydro-6-deoxy-alpha-D-glucose</KM>
        <KM evidence="2">0.84 mM for NADPH</KM>
        <KM evidence="2">0.89 mM for NADH</KM>
        <text>kcat is 406 min(-1) for the reduction reaction with NADPH, and 1594 min(-1) for that with NADH.</text>
    </kinetics>
    <temperatureDependence>
        <text evidence="2">Optimum temperature is 15-37 degrees Celsius. Active over a broad range of temperatures, from 4 to 80 degrees Celsius.</text>
    </temperatureDependence>
</comment>
<comment type="pathway">
    <text evidence="2">Bacterial outer membrane biogenesis; LPS O-antigen biosynthesis.</text>
</comment>
<comment type="disruption phenotype">
    <text evidence="2">Cells lacking this gene produce semirough (SR-type) LPS with only one O unit attached to the core-lipid A moiety while the wild-type strain produces normal LPS.</text>
</comment>
<comment type="similarity">
    <text evidence="3">Belongs to the NAD(P)-dependent epimerase/dehydratase family.</text>
</comment>
<organism>
    <name type="scientific">Escherichia coli</name>
    <dbReference type="NCBI Taxonomy" id="562"/>
    <lineage>
        <taxon>Bacteria</taxon>
        <taxon>Pseudomonadati</taxon>
        <taxon>Pseudomonadota</taxon>
        <taxon>Gammaproteobacteria</taxon>
        <taxon>Enterobacterales</taxon>
        <taxon>Enterobacteriaceae</taxon>
        <taxon>Escherichia</taxon>
    </lineage>
</organism>
<reference key="1">
    <citation type="journal article" date="2004" name="J. Bacteriol.">
        <title>Synthesis of the heteropolysaccharide O antigen of Escherichia coli O52 requires an ABC transporter: structural and genetic evidence.</title>
        <authorList>
            <person name="Feng L."/>
            <person name="Senchenkova S.N."/>
            <person name="Yang J."/>
            <person name="Shashkov A.S."/>
            <person name="Tao J."/>
            <person name="Guo H."/>
            <person name="Cheng J."/>
            <person name="Ren Y."/>
            <person name="Knirel Y.A."/>
            <person name="Reeves P.R."/>
            <person name="Wang L."/>
        </authorList>
    </citation>
    <scope>NUCLEOTIDE SEQUENCE [GENOMIC DNA]</scope>
    <source>
        <strain>O52 / G1066</strain>
    </source>
</reference>
<reference key="2">
    <citation type="journal article" date="2008" name="Mol. Microbiol.">
        <title>Characterization of the dTDP-D-fucofuranose biosynthetic pathway in Escherichia coli O52.</title>
        <authorList>
            <person name="Wang Q."/>
            <person name="Ding P."/>
            <person name="Perepelov A.V."/>
            <person name="Xu Y."/>
            <person name="Wang Y."/>
            <person name="Knirel Y.A."/>
            <person name="Wang L."/>
            <person name="Feng L."/>
        </authorList>
    </citation>
    <scope>FUNCTION</scope>
    <scope>CATALYTIC ACTIVITY</scope>
    <scope>ROLE IN O ANTIGEN BIOSYNTHESIS</scope>
    <scope>BIOPHYSICOCHEMICAL PROPERTIES</scope>
    <scope>SUBSTRATE SPECIFICITY</scope>
    <scope>ACTIVITY REGULATION</scope>
    <scope>PATHWAY</scope>
    <scope>DISRUPTION PHENOTYPE</scope>
    <source>
        <strain>O52 / G1066</strain>
    </source>
</reference>
<proteinExistence type="evidence at protein level"/>
<feature type="chain" id="PRO_0000425107" description="dTDP-4-dehydro-6-deoxyglucose reductase">
    <location>
        <begin position="1"/>
        <end position="316"/>
    </location>
</feature>
<feature type="active site" description="Proton acceptor" evidence="1">
    <location>
        <position position="151"/>
    </location>
</feature>
<feature type="binding site" evidence="1">
    <location>
        <begin position="16"/>
        <end position="17"/>
    </location>
    <ligand>
        <name>NAD(+)</name>
        <dbReference type="ChEBI" id="CHEBI:57540"/>
    </ligand>
</feature>
<feature type="binding site" evidence="1">
    <location>
        <position position="155"/>
    </location>
    <ligand>
        <name>NAD(+)</name>
        <dbReference type="ChEBI" id="CHEBI:57540"/>
    </ligand>
</feature>
<gene>
    <name type="primary">fcf1</name>
</gene>